<keyword id="KW-0002">3D-structure</keyword>
<keyword id="KW-0007">Acetylation</keyword>
<keyword id="KW-0963">Cytoplasm</keyword>
<keyword id="KW-0444">Lipid biosynthesis</keyword>
<keyword id="KW-0443">Lipid metabolism</keyword>
<keyword id="KW-0489">Methyltransferase</keyword>
<keyword id="KW-0597">Phosphoprotein</keyword>
<keyword id="KW-1185">Reference proteome</keyword>
<keyword id="KW-0949">S-adenosyl-L-methionine</keyword>
<keyword id="KW-0808">Transferase</keyword>
<feature type="initiator methionine" description="Removed" evidence="9">
    <location>
        <position position="1"/>
    </location>
</feature>
<feature type="chain" id="PRO_0000398358" description="Cyclopropane mycolic acid synthase 3">
    <location>
        <begin position="2"/>
        <end position="287"/>
    </location>
</feature>
<feature type="active site" evidence="1">
    <location>
        <position position="269"/>
    </location>
</feature>
<feature type="binding site">
    <location>
        <begin position="33"/>
        <end position="34"/>
    </location>
    <ligand>
        <name>S-adenosyl-L-methionine</name>
        <dbReference type="ChEBI" id="CHEBI:59789"/>
    </ligand>
</feature>
<feature type="binding site">
    <location>
        <begin position="68"/>
        <end position="76"/>
    </location>
    <ligand>
        <name>S-adenosyl-L-methionine</name>
        <dbReference type="ChEBI" id="CHEBI:59789"/>
    </ligand>
</feature>
<feature type="binding site">
    <location>
        <begin position="94"/>
        <end position="99"/>
    </location>
    <ligand>
        <name>S-adenosyl-L-methionine</name>
        <dbReference type="ChEBI" id="CHEBI:59789"/>
    </ligand>
</feature>
<feature type="binding site">
    <location>
        <begin position="123"/>
        <end position="124"/>
    </location>
    <ligand>
        <name>S-adenosyl-L-methionine</name>
        <dbReference type="ChEBI" id="CHEBI:59789"/>
    </ligand>
</feature>
<feature type="modified residue" description="N-acetylserine" evidence="9">
    <location>
        <position position="2"/>
    </location>
</feature>
<feature type="modified residue" description="Phosphothreonine" evidence="7">
    <location>
        <position position="168"/>
    </location>
</feature>
<feature type="modified residue" description="Phosphothreonine" evidence="7">
    <location>
        <position position="183"/>
    </location>
</feature>
<feature type="mutagenesis site" description="Loss of phosphorylation; when associated with A-183." evidence="7">
    <original>T</original>
    <variation>A</variation>
    <location>
        <position position="168"/>
    </location>
</feature>
<feature type="mutagenesis site" description="Loss of phosphorylation; when associated with A-168." evidence="7">
    <original>T</original>
    <variation>A</variation>
    <location>
        <position position="183"/>
    </location>
</feature>
<feature type="helix" evidence="10">
    <location>
        <begin position="20"/>
        <end position="23"/>
    </location>
</feature>
<feature type="turn" evidence="10">
    <location>
        <begin position="24"/>
        <end position="26"/>
    </location>
</feature>
<feature type="helix" evidence="10">
    <location>
        <begin position="45"/>
        <end position="58"/>
    </location>
</feature>
<feature type="turn" evidence="10">
    <location>
        <begin position="59"/>
        <end position="61"/>
    </location>
</feature>
<feature type="strand" evidence="10">
    <location>
        <begin position="67"/>
        <end position="72"/>
    </location>
</feature>
<feature type="helix" evidence="10">
    <location>
        <begin position="77"/>
        <end position="86"/>
    </location>
</feature>
<feature type="strand" evidence="10">
    <location>
        <begin position="89"/>
        <end position="95"/>
    </location>
</feature>
<feature type="helix" evidence="10">
    <location>
        <begin position="97"/>
        <end position="109"/>
    </location>
</feature>
<feature type="strand" evidence="10">
    <location>
        <begin position="116"/>
        <end position="121"/>
    </location>
</feature>
<feature type="helix" evidence="10">
    <location>
        <begin position="123"/>
        <end position="125"/>
    </location>
</feature>
<feature type="strand" evidence="10">
    <location>
        <begin position="131"/>
        <end position="137"/>
    </location>
</feature>
<feature type="helix" evidence="10">
    <location>
        <begin position="139"/>
        <end position="141"/>
    </location>
</feature>
<feature type="helix" evidence="10">
    <location>
        <begin position="144"/>
        <end position="146"/>
    </location>
</feature>
<feature type="helix" evidence="10">
    <location>
        <begin position="147"/>
        <end position="157"/>
    </location>
</feature>
<feature type="strand" evidence="10">
    <location>
        <begin position="163"/>
        <end position="171"/>
    </location>
</feature>
<feature type="strand" evidence="10">
    <location>
        <begin position="177"/>
        <end position="180"/>
    </location>
</feature>
<feature type="helix" evidence="10">
    <location>
        <begin position="189"/>
        <end position="198"/>
    </location>
</feature>
<feature type="helix" evidence="10">
    <location>
        <begin position="208"/>
        <end position="216"/>
    </location>
</feature>
<feature type="turn" evidence="10">
    <location>
        <begin position="217"/>
        <end position="219"/>
    </location>
</feature>
<feature type="strand" evidence="10">
    <location>
        <begin position="221"/>
        <end position="227"/>
    </location>
</feature>
<feature type="helix" evidence="10">
    <location>
        <begin position="229"/>
        <end position="245"/>
    </location>
</feature>
<feature type="helix" evidence="10">
    <location>
        <begin position="247"/>
        <end position="253"/>
    </location>
</feature>
<feature type="helix" evidence="10">
    <location>
        <begin position="256"/>
        <end position="274"/>
    </location>
</feature>
<feature type="strand" evidence="10">
    <location>
        <begin position="279"/>
        <end position="286"/>
    </location>
</feature>
<evidence type="ECO:0000250" key="1"/>
<evidence type="ECO:0000269" key="2">
    <source>
    </source>
</evidence>
<evidence type="ECO:0000269" key="3">
    <source>
    </source>
</evidence>
<evidence type="ECO:0000269" key="4">
    <source>
    </source>
</evidence>
<evidence type="ECO:0000269" key="5">
    <source>
    </source>
</evidence>
<evidence type="ECO:0000269" key="6">
    <source>
    </source>
</evidence>
<evidence type="ECO:0000269" key="7">
    <source>
    </source>
</evidence>
<evidence type="ECO:0000305" key="8"/>
<evidence type="ECO:0007744" key="9">
    <source>
    </source>
</evidence>
<evidence type="ECO:0007829" key="10">
    <source>
        <dbReference type="PDB" id="1L1E"/>
    </source>
</evidence>
<proteinExistence type="evidence at protein level"/>
<accession>P9WPB3</accession>
<accession>L0T6K4</accession>
<accession>Q6MX38</accession>
<accession>Q7D9R5</accession>
<name>CMAS3_MYCTU</name>
<dbReference type="EC" id="2.1.1.79"/>
<dbReference type="EMBL" id="AL123456">
    <property type="protein sequence ID" value="CCP43203.1"/>
    <property type="molecule type" value="Genomic_DNA"/>
</dbReference>
<dbReference type="PIR" id="B70829">
    <property type="entry name" value="B70829"/>
</dbReference>
<dbReference type="RefSeq" id="WP_003402323.1">
    <property type="nucleotide sequence ID" value="NZ_NVQJ01000002.1"/>
</dbReference>
<dbReference type="RefSeq" id="YP_177730.1">
    <property type="nucleotide sequence ID" value="NC_000962.3"/>
</dbReference>
<dbReference type="PDB" id="1L1E">
    <property type="method" value="X-ray"/>
    <property type="resolution" value="2.00 A"/>
    <property type="chains" value="A/B=1-287"/>
</dbReference>
<dbReference type="PDBsum" id="1L1E"/>
<dbReference type="SMR" id="P9WPB3"/>
<dbReference type="FunCoup" id="P9WPB3">
    <property type="interactions" value="7"/>
</dbReference>
<dbReference type="STRING" id="83332.Rv0470c"/>
<dbReference type="DrugBank" id="DB05154">
    <property type="generic name" value="Pretomanid"/>
</dbReference>
<dbReference type="DrugBank" id="DB01752">
    <property type="generic name" value="S-adenosyl-L-homocysteine"/>
</dbReference>
<dbReference type="iPTMnet" id="P9WPB3"/>
<dbReference type="PaxDb" id="83332-Rv0470c"/>
<dbReference type="GeneID" id="45424432"/>
<dbReference type="GeneID" id="886284"/>
<dbReference type="KEGG" id="mtu:Rv0470c"/>
<dbReference type="KEGG" id="mtv:RVBD_0470c"/>
<dbReference type="TubercuList" id="Rv0470c"/>
<dbReference type="eggNOG" id="COG2230">
    <property type="taxonomic scope" value="Bacteria"/>
</dbReference>
<dbReference type="InParanoid" id="P9WPB3"/>
<dbReference type="OrthoDB" id="9782855at2"/>
<dbReference type="PhylomeDB" id="P9WPB3"/>
<dbReference type="UniPathway" id="UPA00915"/>
<dbReference type="EvolutionaryTrace" id="P9WPB3"/>
<dbReference type="Proteomes" id="UP000001584">
    <property type="component" value="Chromosome"/>
</dbReference>
<dbReference type="GO" id="GO:0005737">
    <property type="term" value="C:cytoplasm"/>
    <property type="evidence" value="ECO:0007669"/>
    <property type="project" value="UniProtKB-SubCell"/>
</dbReference>
<dbReference type="GO" id="GO:0008825">
    <property type="term" value="F:cyclopropane-fatty-acyl-phospholipid synthase activity"/>
    <property type="evidence" value="ECO:0000315"/>
    <property type="project" value="MTBBASE"/>
</dbReference>
<dbReference type="GO" id="GO:0008610">
    <property type="term" value="P:lipid biosynthetic process"/>
    <property type="evidence" value="ECO:0000315"/>
    <property type="project" value="UniProtKB"/>
</dbReference>
<dbReference type="GO" id="GO:0032259">
    <property type="term" value="P:methylation"/>
    <property type="evidence" value="ECO:0007669"/>
    <property type="project" value="UniProtKB-KW"/>
</dbReference>
<dbReference type="GO" id="GO:0071768">
    <property type="term" value="P:mycolic acid biosynthetic process"/>
    <property type="evidence" value="ECO:0000314"/>
    <property type="project" value="MTBBASE"/>
</dbReference>
<dbReference type="GO" id="GO:0046500">
    <property type="term" value="P:S-adenosylmethionine metabolic process"/>
    <property type="evidence" value="ECO:0000314"/>
    <property type="project" value="MTBBASE"/>
</dbReference>
<dbReference type="GO" id="GO:0042783">
    <property type="term" value="P:symbiont-mediated evasion of host immune response"/>
    <property type="evidence" value="ECO:0000315"/>
    <property type="project" value="MTBBASE"/>
</dbReference>
<dbReference type="GO" id="GO:0052167">
    <property type="term" value="P:symbiont-mediated perturbation of host innate immune response"/>
    <property type="evidence" value="ECO:0000315"/>
    <property type="project" value="MTBBASE"/>
</dbReference>
<dbReference type="CDD" id="cd02440">
    <property type="entry name" value="AdoMet_MTases"/>
    <property type="match status" value="1"/>
</dbReference>
<dbReference type="FunFam" id="3.40.50.150:FF:000115">
    <property type="entry name" value="Cyclopropane mycolic acid synthase 1"/>
    <property type="match status" value="1"/>
</dbReference>
<dbReference type="Gene3D" id="3.40.50.150">
    <property type="entry name" value="Vaccinia Virus protein VP39"/>
    <property type="match status" value="1"/>
</dbReference>
<dbReference type="InterPro" id="IPR050723">
    <property type="entry name" value="CFA/CMAS"/>
</dbReference>
<dbReference type="InterPro" id="IPR003333">
    <property type="entry name" value="CMAS"/>
</dbReference>
<dbReference type="InterPro" id="IPR047672">
    <property type="entry name" value="CMAS_actinobact"/>
</dbReference>
<dbReference type="InterPro" id="IPR029063">
    <property type="entry name" value="SAM-dependent_MTases_sf"/>
</dbReference>
<dbReference type="NCBIfam" id="NF040660">
    <property type="entry name" value="mycolic_MTase"/>
    <property type="match status" value="1"/>
</dbReference>
<dbReference type="PANTHER" id="PTHR43667">
    <property type="entry name" value="CYCLOPROPANE-FATTY-ACYL-PHOSPHOLIPID SYNTHASE"/>
    <property type="match status" value="1"/>
</dbReference>
<dbReference type="PANTHER" id="PTHR43667:SF1">
    <property type="entry name" value="CYCLOPROPANE-FATTY-ACYL-PHOSPHOLIPID SYNTHASE"/>
    <property type="match status" value="1"/>
</dbReference>
<dbReference type="Pfam" id="PF02353">
    <property type="entry name" value="CMAS"/>
    <property type="match status" value="1"/>
</dbReference>
<dbReference type="PIRSF" id="PIRSF003085">
    <property type="entry name" value="CMAS"/>
    <property type="match status" value="1"/>
</dbReference>
<dbReference type="SUPFAM" id="SSF53335">
    <property type="entry name" value="S-adenosyl-L-methionine-dependent methyltransferases"/>
    <property type="match status" value="1"/>
</dbReference>
<organism>
    <name type="scientific">Mycobacterium tuberculosis (strain ATCC 25618 / H37Rv)</name>
    <dbReference type="NCBI Taxonomy" id="83332"/>
    <lineage>
        <taxon>Bacteria</taxon>
        <taxon>Bacillati</taxon>
        <taxon>Actinomycetota</taxon>
        <taxon>Actinomycetes</taxon>
        <taxon>Mycobacteriales</taxon>
        <taxon>Mycobacteriaceae</taxon>
        <taxon>Mycobacterium</taxon>
        <taxon>Mycobacterium tuberculosis complex</taxon>
    </lineage>
</organism>
<protein>
    <recommendedName>
        <fullName>Cyclopropane mycolic acid synthase 3</fullName>
        <shortName>CMAS</shortName>
        <ecNumber>2.1.1.79</ecNumber>
    </recommendedName>
    <alternativeName>
        <fullName>Cyclopropane-fatty-acyl-phospholipid synthase</fullName>
        <shortName>CFA synthase</shortName>
        <shortName>Cyclopropane fatty acid synthase</shortName>
    </alternativeName>
    <alternativeName>
        <fullName>Mycolic acid methyltransferase</fullName>
        <shortName>MA-MT</shortName>
    </alternativeName>
    <alternativeName>
        <fullName>S-adenosylmethionine-dependent methyltransferase</fullName>
        <shortName>AdoMet-MT</shortName>
        <shortName>SAM-MT</shortName>
    </alternativeName>
</protein>
<reference key="1">
    <citation type="journal article" date="1998" name="Nature">
        <title>Deciphering the biology of Mycobacterium tuberculosis from the complete genome sequence.</title>
        <authorList>
            <person name="Cole S.T."/>
            <person name="Brosch R."/>
            <person name="Parkhill J."/>
            <person name="Garnier T."/>
            <person name="Churcher C.M."/>
            <person name="Harris D.E."/>
            <person name="Gordon S.V."/>
            <person name="Eiglmeier K."/>
            <person name="Gas S."/>
            <person name="Barry C.E. III"/>
            <person name="Tekaia F."/>
            <person name="Badcock K."/>
            <person name="Basham D."/>
            <person name="Brown D."/>
            <person name="Chillingworth T."/>
            <person name="Connor R."/>
            <person name="Davies R.M."/>
            <person name="Devlin K."/>
            <person name="Feltwell T."/>
            <person name="Gentles S."/>
            <person name="Hamlin N."/>
            <person name="Holroyd S."/>
            <person name="Hornsby T."/>
            <person name="Jagels K."/>
            <person name="Krogh A."/>
            <person name="McLean J."/>
            <person name="Moule S."/>
            <person name="Murphy L.D."/>
            <person name="Oliver S."/>
            <person name="Osborne J."/>
            <person name="Quail M.A."/>
            <person name="Rajandream M.A."/>
            <person name="Rogers J."/>
            <person name="Rutter S."/>
            <person name="Seeger K."/>
            <person name="Skelton S."/>
            <person name="Squares S."/>
            <person name="Squares R."/>
            <person name="Sulston J.E."/>
            <person name="Taylor K."/>
            <person name="Whitehead S."/>
            <person name="Barrell B.G."/>
        </authorList>
    </citation>
    <scope>NUCLEOTIDE SEQUENCE [LARGE SCALE GENOMIC DNA]</scope>
    <source>
        <strain>ATCC 25618 / H37Rv</strain>
    </source>
</reference>
<reference key="2">
    <citation type="journal article" date="2000" name="Mol. Cell">
        <title>A novel mycolic acid cyclopropane synthetase is required for cording, persistence, and virulence of Mycobacterium tuberculosis.</title>
        <authorList>
            <person name="Glickman M.S."/>
            <person name="Cox J.S."/>
            <person name="Jacobs W.R. Jr."/>
        </authorList>
    </citation>
    <scope>FUNCTION IN THE BIOSYNTHESIS OF CYCLOPROPANE RING IN THE ALPHA MYCOLATE</scope>
    <scope>DISRUPTION PHENOTYPE</scope>
    <scope>NOMENCLATURE</scope>
    <source>
        <strain>ATCC 25618 / H37Rv</strain>
    </source>
</reference>
<reference key="3">
    <citation type="journal article" date="2007" name="PLoS ONE">
        <title>Thiacetazone, an antitubercular drug that inhibits cyclopropanation of cell wall mycolic acids in mycobacteria.</title>
        <authorList>
            <person name="Alahari A."/>
            <person name="Trivelli X."/>
            <person name="Guerardel Y."/>
            <person name="Dover L.G."/>
            <person name="Besra G.S."/>
            <person name="Sacchettini J.C."/>
            <person name="Reynolds R.C."/>
            <person name="Coxon G.D."/>
            <person name="Kremer L."/>
        </authorList>
    </citation>
    <scope>ACTIVITY REGULATION</scope>
    <source>
        <strain>ATCC 25618 / H37Rv</strain>
    </source>
</reference>
<reference key="4">
    <citation type="journal article" date="2008" name="BMC Syst. Biol.">
        <title>targetTB: a target identification pipeline for Mycobacterium tuberculosis through an interactome, reactome and genome-scale structural analysis.</title>
        <authorList>
            <person name="Raman K."/>
            <person name="Yeturu K."/>
            <person name="Chandra N."/>
        </authorList>
    </citation>
    <scope>IDENTIFICATION AS A DRUG TARGET [LARGE SCALE ANALYSIS]</scope>
</reference>
<reference key="5">
    <citation type="journal article" date="2009" name="Chem. Biol.">
        <title>Mycolic acid cyclopropanation is essential for viability, drug resistance, and cell wall integrity of Mycobacterium tuberculosis.</title>
        <authorList>
            <person name="Barkan D."/>
            <person name="Liu Z."/>
            <person name="Sacchettini J.C."/>
            <person name="Glickman M.S."/>
        </authorList>
    </citation>
    <scope>ACTIVITY REGULATION</scope>
</reference>
<reference key="6">
    <citation type="journal article" date="2009" name="J. Biol. Chem.">
        <title>S-adenosyl-N-decyl-aminoethyl, a potent bisubstrate inhibitor of mycobacterium tuberculosis mycolic acid methyltransferases.</title>
        <authorList>
            <person name="Vaubourgeix J."/>
            <person name="Bardou F."/>
            <person name="Boissier F."/>
            <person name="Julien S."/>
            <person name="Constant P."/>
            <person name="Ploux O."/>
            <person name="Daffe M."/>
            <person name="Quemard A."/>
            <person name="Mourey L."/>
        </authorList>
    </citation>
    <scope>ACTIVITY REGULATION</scope>
    <source>
        <strain>ATCC 25618 / H37Rv</strain>
    </source>
</reference>
<reference key="7">
    <citation type="journal article" date="2011" name="Mol. Cell. Proteomics">
        <title>Proteogenomic analysis of Mycobacterium tuberculosis by high resolution mass spectrometry.</title>
        <authorList>
            <person name="Kelkar D.S."/>
            <person name="Kumar D."/>
            <person name="Kumar P."/>
            <person name="Balakrishnan L."/>
            <person name="Muthusamy B."/>
            <person name="Yadav A.K."/>
            <person name="Shrivastava P."/>
            <person name="Marimuthu A."/>
            <person name="Anand S."/>
            <person name="Sundaram H."/>
            <person name="Kingsbury R."/>
            <person name="Harsha H.C."/>
            <person name="Nair B."/>
            <person name="Prasad T.S."/>
            <person name="Chauhan D.S."/>
            <person name="Katoch K."/>
            <person name="Katoch V.M."/>
            <person name="Kumar P."/>
            <person name="Chaerkady R."/>
            <person name="Ramachandran S."/>
            <person name="Dash D."/>
            <person name="Pandey A."/>
        </authorList>
    </citation>
    <scope>ACETYLATION [LARGE SCALE ANALYSIS] AT SER-2</scope>
    <scope>CLEAVAGE OF INITIATOR METHIONINE [LARGE SCALE ANALYSIS]</scope>
    <scope>IDENTIFICATION BY MASS SPECTROMETRY [LARGE SCALE ANALYSIS]</scope>
    <source>
        <strain>ATCC 25618 / H37Rv</strain>
    </source>
</reference>
<reference key="8">
    <citation type="journal article" date="2012" name="J. Biol. Chem.">
        <title>Phosphorylation of mycobacterial PcaA inhibits mycolic acid cyclopropanation: consequences for intracellular survival and for phagosome maturation block.</title>
        <authorList>
            <person name="Corrales R.M."/>
            <person name="Molle V."/>
            <person name="Leiba J."/>
            <person name="Mourey L."/>
            <person name="de Chastellier C."/>
            <person name="Kremer L."/>
        </authorList>
    </citation>
    <scope>FUNCTION</scope>
    <scope>CATALYTIC ACTIVITY</scope>
    <scope>PHOSPHORYLATION AT THR-168 AND THR-183</scope>
    <scope>MUTAGENESIS OF THR-168 AND THR-183</scope>
    <scope>DISRUPTION PHENOTYPE</scope>
    <scope>SUBSTRATE SPECIFICITY</scope>
</reference>
<reference key="9">
    <citation type="journal article" date="2002" name="J. Biol. Chem.">
        <title>Crystal structures of mycolic acid cyclopropane synthases from Mycobacterium tuberculosis.</title>
        <authorList>
            <person name="Huang C.-C."/>
            <person name="Smith C.V."/>
            <person name="Glickman M.S."/>
            <person name="Jacobs W.R. Jr."/>
            <person name="Sacchettini J.C."/>
        </authorList>
    </citation>
    <scope>X-RAY CRYSTALLOGRAPHY (2.0 ANGSTROMS) IN COMPLEX WITH S-ADENOSYL-L-HOMOCYSTEINE</scope>
    <scope>SUBUNIT</scope>
    <source>
        <strain>ATCC 25618 / H37Rv</strain>
    </source>
</reference>
<sequence>MSVQLTPHFGNVQAHYDLSDDFFRLFLDPTQTYSCAYFERDDMTLQEAQIAKIDLALGKLNLEPGMTLLDIGCGWGATMRRAIEKYDVNVVGLTLSENQAGHVQKMFDQMDTPRSRRVLLEGWEKFDEPVDRIVSIGAFEHFGHQRYHHFFEVTHRTLPADGKMLLHTIVRPTFKEGREKGLTLTHELVHFTKFILAEIFPGGWLPSIPTVHEYAEKVGFRVTAVQSLQLHYARTLDMWATALEANKDQAIAIQSQTVYDRYMKYLTGCAKLFRQGYTDVDQFTLEK</sequence>
<gene>
    <name type="primary">pcaA</name>
    <name type="synonym">cma3</name>
    <name type="synonym">cmaA3</name>
    <name type="synonym">CMAS-3</name>
    <name type="ordered locus">Rv0470c</name>
</gene>
<comment type="function">
    <text evidence="2 7">Involved in the phagosome maturation block (PMB). Catalyzes the conversion of a double bond to a cyclopropane ring at the proximal position of an alpha mycolic acid via the transfer of a methylene group from S-adenosyl-L-methionine. It can use cis, cis 11,14-eicosadienoic acid and linoelaidic acid as substrate. Cyclopropanated mycolic acids are key factors participating in cell envelope permeability, host immunomodulation and persistence.</text>
</comment>
<comment type="catalytic activity">
    <reaction evidence="7">
        <text>a 1-acyl-2-(9Z)-enoyl-sn-glycero-3-phospholipid + S-adenosyl-L-methionine = a 1-acyl-2-(9-cyclopronane)-acyl-sn-glycero-3-phospholipid + S-adenosyl-L-homocysteine + H(+)</text>
        <dbReference type="Rhea" id="RHEA:11988"/>
        <dbReference type="ChEBI" id="CHEBI:15378"/>
        <dbReference type="ChEBI" id="CHEBI:57856"/>
        <dbReference type="ChEBI" id="CHEBI:59789"/>
        <dbReference type="ChEBI" id="CHEBI:76593"/>
        <dbReference type="ChEBI" id="CHEBI:76594"/>
        <dbReference type="EC" id="2.1.1.79"/>
    </reaction>
</comment>
<comment type="activity regulation">
    <text evidence="4 5 6">Regulated by PknF. Inhibited by S-adenosyl-N-decyl-aminoethyl (SADAE), thiacetazone (TAC) and dioctylamine.</text>
</comment>
<comment type="pathway">
    <text>Lipid metabolism; mycolic acid biosynthesis.</text>
</comment>
<comment type="subunit">
    <text evidence="3">Homodimer.</text>
</comment>
<comment type="subcellular location">
    <subcellularLocation>
        <location evidence="1">Cytoplasm</location>
    </subcellularLocation>
</comment>
<comment type="PTM">
    <text evidence="7">Phosphorylation by PknF at Thr-168 and Thr-183 regulates the mycolic acid profile which affects colonial cording, intramacrophage replication and abrogates the PMB.</text>
</comment>
<comment type="disruption phenotype">
    <text evidence="2 7">Inactivation of pcaA does not affect initial growth of the organism over the first 3 weeks, but after 6 weeks, when wild-type organisms persist at a constant level indefinitely, the pcaA mutant is progressively eliminated from the animal. Cells lacking this gene accumulates a hybrid mycolate with a cis double bond at the proximal position in place of the cis cyclopropane present in wild-type alpha mycolate.</text>
</comment>
<comment type="miscellaneous">
    <text>Was identified as a high-confidence drug target.</text>
</comment>
<comment type="similarity">
    <text evidence="8">Belongs to the CFA/CMAS family.</text>
</comment>